<gene>
    <name type="ordered locus">MRA_0901</name>
</gene>
<feature type="chain" id="PRO_0000361234" description="Putative S-adenosyl-L-methionine-dependent methyltransferase MRA_0901">
    <location>
        <begin position="1"/>
        <end position="325"/>
    </location>
</feature>
<feature type="binding site" evidence="1">
    <location>
        <position position="126"/>
    </location>
    <ligand>
        <name>S-adenosyl-L-methionine</name>
        <dbReference type="ChEBI" id="CHEBI:59789"/>
    </ligand>
</feature>
<feature type="binding site" evidence="1">
    <location>
        <begin position="155"/>
        <end position="156"/>
    </location>
    <ligand>
        <name>S-adenosyl-L-methionine</name>
        <dbReference type="ChEBI" id="CHEBI:59789"/>
    </ligand>
</feature>
<keyword id="KW-0489">Methyltransferase</keyword>
<keyword id="KW-1185">Reference proteome</keyword>
<keyword id="KW-0949">S-adenosyl-L-methionine</keyword>
<keyword id="KW-0808">Transferase</keyword>
<name>Y901_MYCTA</name>
<sequence>MRTEDDSWDVTTSVGSTGLLVAAARALETQKADPLAIDPYAEVFCRAAGGEWADVLDGKLPDHYLTTGDFGEHFVNFQGARTRYFDEYFSRATAAGMKQVVILAAGLDSRAFRLQWPIGTTIFELDRPQVLDFKNAVLADYHIRPRAQRRSVAVDLRDEWQIALCNNGFDANRPSAWIAEGLLVYLSAEAQQRLFIGIDTLASPGSHVAVEEATPLDPCEFAAKLERERAANAQGDPRRFFQMVYNERWARATEWFDERGWRATATPLAEYLRRVGRAVPEADTEAAPMVTAITFVSAVRTGLVADPARTSPSSTSIGFKRFEAD</sequence>
<evidence type="ECO:0000250" key="1"/>
<evidence type="ECO:0000305" key="2"/>
<proteinExistence type="inferred from homology"/>
<comment type="function">
    <text evidence="1">Exhibits S-adenosyl-L-methionine-dependent methyltransferase activity.</text>
</comment>
<comment type="similarity">
    <text evidence="2">Belongs to the UPF0677 family.</text>
</comment>
<organism>
    <name type="scientific">Mycobacterium tuberculosis (strain ATCC 25177 / H37Ra)</name>
    <dbReference type="NCBI Taxonomy" id="419947"/>
    <lineage>
        <taxon>Bacteria</taxon>
        <taxon>Bacillati</taxon>
        <taxon>Actinomycetota</taxon>
        <taxon>Actinomycetes</taxon>
        <taxon>Mycobacteriales</taxon>
        <taxon>Mycobacteriaceae</taxon>
        <taxon>Mycobacterium</taxon>
        <taxon>Mycobacterium tuberculosis complex</taxon>
    </lineage>
</organism>
<reference key="1">
    <citation type="journal article" date="2008" name="PLoS ONE">
        <title>Genetic basis of virulence attenuation revealed by comparative genomic analysis of Mycobacterium tuberculosis strain H37Ra versus H37Rv.</title>
        <authorList>
            <person name="Zheng H."/>
            <person name="Lu L."/>
            <person name="Wang B."/>
            <person name="Pu S."/>
            <person name="Zhang X."/>
            <person name="Zhu G."/>
            <person name="Shi W."/>
            <person name="Zhang L."/>
            <person name="Wang H."/>
            <person name="Wang S."/>
            <person name="Zhao G."/>
            <person name="Zhang Y."/>
        </authorList>
    </citation>
    <scope>NUCLEOTIDE SEQUENCE [LARGE SCALE GENOMIC DNA]</scope>
    <source>
        <strain>ATCC 25177 / H37Ra</strain>
    </source>
</reference>
<protein>
    <recommendedName>
        <fullName>Putative S-adenosyl-L-methionine-dependent methyltransferase MRA_0901</fullName>
        <ecNumber>2.1.1.-</ecNumber>
    </recommendedName>
</protein>
<dbReference type="EC" id="2.1.1.-"/>
<dbReference type="EMBL" id="CP000611">
    <property type="protein sequence ID" value="ABQ72632.1"/>
    <property type="molecule type" value="Genomic_DNA"/>
</dbReference>
<dbReference type="RefSeq" id="WP_003404654.1">
    <property type="nucleotide sequence ID" value="NZ_CP016972.1"/>
</dbReference>
<dbReference type="SMR" id="A5U0T2"/>
<dbReference type="KEGG" id="mra:MRA_0901"/>
<dbReference type="eggNOG" id="COG3315">
    <property type="taxonomic scope" value="Bacteria"/>
</dbReference>
<dbReference type="HOGENOM" id="CLU_056160_2_1_11"/>
<dbReference type="Proteomes" id="UP000001988">
    <property type="component" value="Chromosome"/>
</dbReference>
<dbReference type="GO" id="GO:0008168">
    <property type="term" value="F:methyltransferase activity"/>
    <property type="evidence" value="ECO:0007669"/>
    <property type="project" value="UniProtKB-KW"/>
</dbReference>
<dbReference type="GO" id="GO:0032259">
    <property type="term" value="P:methylation"/>
    <property type="evidence" value="ECO:0007669"/>
    <property type="project" value="UniProtKB-KW"/>
</dbReference>
<dbReference type="FunFam" id="3.40.50.150:FF:000152">
    <property type="entry name" value="S-adenosyl-L-methionine-dependent methyltransferase"/>
    <property type="match status" value="1"/>
</dbReference>
<dbReference type="Gene3D" id="3.40.50.150">
    <property type="entry name" value="Vaccinia Virus protein VP39"/>
    <property type="match status" value="1"/>
</dbReference>
<dbReference type="InterPro" id="IPR007213">
    <property type="entry name" value="Ppm1/Ppm2/Tcmp"/>
</dbReference>
<dbReference type="InterPro" id="IPR029063">
    <property type="entry name" value="SAM-dependent_MTases_sf"/>
</dbReference>
<dbReference type="InterPro" id="IPR011610">
    <property type="entry name" value="SAM_mthyl_Trfase_ML2640-like"/>
</dbReference>
<dbReference type="NCBIfam" id="TIGR00027">
    <property type="entry name" value="mthyl_TIGR00027"/>
    <property type="match status" value="1"/>
</dbReference>
<dbReference type="PANTHER" id="PTHR43619">
    <property type="entry name" value="S-ADENOSYL-L-METHIONINE-DEPENDENT METHYLTRANSFERASE YKTD-RELATED"/>
    <property type="match status" value="1"/>
</dbReference>
<dbReference type="PANTHER" id="PTHR43619:SF2">
    <property type="entry name" value="S-ADENOSYL-L-METHIONINE-DEPENDENT METHYLTRANSFERASES SUPERFAMILY PROTEIN"/>
    <property type="match status" value="1"/>
</dbReference>
<dbReference type="Pfam" id="PF04072">
    <property type="entry name" value="LCM"/>
    <property type="match status" value="1"/>
</dbReference>
<dbReference type="SUPFAM" id="SSF53335">
    <property type="entry name" value="S-adenosyl-L-methionine-dependent methyltransferases"/>
    <property type="match status" value="1"/>
</dbReference>
<accession>A5U0T2</accession>